<keyword id="KW-1064">Adaptive immunity</keyword>
<keyword id="KW-1003">Cell membrane</keyword>
<keyword id="KW-1015">Disulfide bond</keyword>
<keyword id="KW-0325">Glycoprotein</keyword>
<keyword id="KW-0391">Immunity</keyword>
<keyword id="KW-0393">Immunoglobulin domain</keyword>
<keyword id="KW-0472">Membrane</keyword>
<keyword id="KW-0675">Receptor</keyword>
<keyword id="KW-1185">Reference proteome</keyword>
<keyword id="KW-0732">Signal</keyword>
<keyword id="KW-1279">T cell receptor</keyword>
<evidence type="ECO:0000255" key="1"/>
<evidence type="ECO:0000255" key="2">
    <source>
        <dbReference type="PROSITE-ProRule" id="PRU00114"/>
    </source>
</evidence>
<evidence type="ECO:0000303" key="3">
    <source>
    </source>
</evidence>
<evidence type="ECO:0000303" key="4">
    <source>
    </source>
</evidence>
<evidence type="ECO:0000303" key="5">
    <source>
    </source>
</evidence>
<evidence type="ECO:0000303" key="6">
    <source>
    </source>
</evidence>
<evidence type="ECO:0000303" key="7">
    <source>
    </source>
</evidence>
<evidence type="ECO:0000303" key="8">
    <source ref="2"/>
</evidence>
<evidence type="ECO:0000305" key="9"/>
<sequence length="109" mass="12172">MKLVTSITVLLSLGIMGDAKTTQPNSMESNEEEPVHLPCNHSTISGTDYIHWYRQLPSQGPEYVIHGLTSNVNNRMASLAIAEDRKSSTLILHRATLRDAAVYYCILRD</sequence>
<name>TVAZ2_HUMAN</name>
<reference key="1">
    <citation type="journal article" date="2003" name="Nature">
        <title>The DNA sequence and analysis of human chromosome 14.</title>
        <authorList>
            <person name="Heilig R."/>
            <person name="Eckenberg R."/>
            <person name="Petit J.-L."/>
            <person name="Fonknechten N."/>
            <person name="Da Silva C."/>
            <person name="Cattolico L."/>
            <person name="Levy M."/>
            <person name="Barbe V."/>
            <person name="De Berardinis V."/>
            <person name="Ureta-Vidal A."/>
            <person name="Pelletier E."/>
            <person name="Vico V."/>
            <person name="Anthouard V."/>
            <person name="Rowen L."/>
            <person name="Madan A."/>
            <person name="Qin S."/>
            <person name="Sun H."/>
            <person name="Du H."/>
            <person name="Pepin K."/>
            <person name="Artiguenave F."/>
            <person name="Robert C."/>
            <person name="Cruaud C."/>
            <person name="Bruels T."/>
            <person name="Jaillon O."/>
            <person name="Friedlander L."/>
            <person name="Samson G."/>
            <person name="Brottier P."/>
            <person name="Cure S."/>
            <person name="Segurens B."/>
            <person name="Aniere F."/>
            <person name="Samain S."/>
            <person name="Crespeau H."/>
            <person name="Abbasi N."/>
            <person name="Aiach N."/>
            <person name="Boscus D."/>
            <person name="Dickhoff R."/>
            <person name="Dors M."/>
            <person name="Dubois I."/>
            <person name="Friedman C."/>
            <person name="Gouyvenoux M."/>
            <person name="James R."/>
            <person name="Madan A."/>
            <person name="Mairey-Estrada B."/>
            <person name="Mangenot S."/>
            <person name="Martins N."/>
            <person name="Menard M."/>
            <person name="Oztas S."/>
            <person name="Ratcliffe A."/>
            <person name="Shaffer T."/>
            <person name="Trask B."/>
            <person name="Vacherie B."/>
            <person name="Bellemere C."/>
            <person name="Belser C."/>
            <person name="Besnard-Gonnet M."/>
            <person name="Bartol-Mavel D."/>
            <person name="Boutard M."/>
            <person name="Briez-Silla S."/>
            <person name="Combette S."/>
            <person name="Dufosse-Laurent V."/>
            <person name="Ferron C."/>
            <person name="Lechaplais C."/>
            <person name="Louesse C."/>
            <person name="Muselet D."/>
            <person name="Magdelenat G."/>
            <person name="Pateau E."/>
            <person name="Petit E."/>
            <person name="Sirvain-Trukniewicz P."/>
            <person name="Trybou A."/>
            <person name="Vega-Czarny N."/>
            <person name="Bataille E."/>
            <person name="Bluet E."/>
            <person name="Bordelais I."/>
            <person name="Dubois M."/>
            <person name="Dumont C."/>
            <person name="Guerin T."/>
            <person name="Haffray S."/>
            <person name="Hammadi R."/>
            <person name="Muanga J."/>
            <person name="Pellouin V."/>
            <person name="Robert D."/>
            <person name="Wunderle E."/>
            <person name="Gauguet G."/>
            <person name="Roy A."/>
            <person name="Sainte-Marthe L."/>
            <person name="Verdier J."/>
            <person name="Verdier-Discala C."/>
            <person name="Hillier L.W."/>
            <person name="Fulton L."/>
            <person name="McPherson J."/>
            <person name="Matsuda F."/>
            <person name="Wilson R."/>
            <person name="Scarpelli C."/>
            <person name="Gyapay G."/>
            <person name="Wincker P."/>
            <person name="Saurin W."/>
            <person name="Quetier F."/>
            <person name="Waterston R."/>
            <person name="Hood L."/>
            <person name="Weissenbach J."/>
        </authorList>
    </citation>
    <scope>NUCLEOTIDE SEQUENCE [LARGE SCALE GENOMIC DNA] (IMGT ALLELE TRAV26-2*01)</scope>
</reference>
<reference key="2">
    <citation type="book" date="2001" name="The T Cell Receptor FactsBook.">
        <title>The T Cell Receptor FactsBook.</title>
        <editorList>
            <person name="Lefranc M.P."/>
            <person name="Lefranc G."/>
        </editorList>
        <authorList>
            <person name="Lefranc M.P."/>
            <person name="Lefranc G."/>
        </authorList>
    </citation>
    <scope>NOMENCLATURE</scope>
</reference>
<reference key="3">
    <citation type="journal article" date="2004" name="Nat. Rev. Immunol.">
        <title>The many important facets of T-cell repertoire diversity.</title>
        <authorList>
            <person name="Nikolich-Zugich J."/>
            <person name="Slifka M.K."/>
            <person name="Messaoudi I."/>
        </authorList>
    </citation>
    <scope>REVIEW ON T CELL REPERTOIRE DIVERSITY</scope>
</reference>
<reference key="4">
    <citation type="journal article" date="2010" name="Cold Spring Harb. Perspect. Biol.">
        <title>Structural biology of the T-cell receptor: insights into receptor assembly, ligand recognition, and initiation of signaling.</title>
        <authorList>
            <person name="Wucherpfennig K.W."/>
            <person name="Gagnon E."/>
            <person name="Call M.J."/>
            <person name="Huseby E.S."/>
            <person name="Call M.E."/>
        </authorList>
    </citation>
    <scope>REVIEW ON T CELL RECEPTOR-CD3 COMPLEX ASSEMBLY</scope>
    <scope>SUBCELLULAR LOCATION</scope>
</reference>
<reference key="5">
    <citation type="journal article" date="2013" name="Nat. Rev. Immunol.">
        <title>T cell receptor signalling networks: branched, diversified and bounded.</title>
        <authorList>
            <person name="Brownlie R.J."/>
            <person name="Zamoyska R."/>
        </authorList>
    </citation>
    <scope>REVIEW ON T CELL RECEPTOR SIGNALING</scope>
</reference>
<reference key="6">
    <citation type="journal article" date="2014" name="Front. Immunol.">
        <title>Immunoglobulin and T Cell Receptor Genes: IMGT((R)) and the Birth and Rise of Immunoinformatics.</title>
        <authorList>
            <person name="Lefranc M.P."/>
        </authorList>
    </citation>
    <scope>NOMENCLATURE</scope>
</reference>
<reference key="7">
    <citation type="journal article" date="2015" name="Annu. Rev. Immunol.">
        <title>T cell antigen receptor recognition of antigen-presenting molecules.</title>
        <authorList>
            <person name="Rossjohn J."/>
            <person name="Gras S."/>
            <person name="Miles J.J."/>
            <person name="Turner S.J."/>
            <person name="Godfrey D.I."/>
            <person name="McCluskey J."/>
        </authorList>
    </citation>
    <scope>REVIEW ON FUNCTION</scope>
</reference>
<gene>
    <name evidence="8" type="primary">TRAV26-2</name>
</gene>
<organism>
    <name type="scientific">Homo sapiens</name>
    <name type="common">Human</name>
    <dbReference type="NCBI Taxonomy" id="9606"/>
    <lineage>
        <taxon>Eukaryota</taxon>
        <taxon>Metazoa</taxon>
        <taxon>Chordata</taxon>
        <taxon>Craniata</taxon>
        <taxon>Vertebrata</taxon>
        <taxon>Euteleostomi</taxon>
        <taxon>Mammalia</taxon>
        <taxon>Eutheria</taxon>
        <taxon>Euarchontoglires</taxon>
        <taxon>Primates</taxon>
        <taxon>Haplorrhini</taxon>
        <taxon>Catarrhini</taxon>
        <taxon>Hominidae</taxon>
        <taxon>Homo</taxon>
    </lineage>
</organism>
<comment type="function">
    <text evidence="3 5 6 7">V region of the variable domain of T cell receptor (TR) alpha chain that participates in the antigen recognition (PubMed:24600447). Alpha-beta T cell receptors are antigen specific receptors which are essential to the immune response and are present on the cell surface of T lymphocytes. Recognize peptide-major histocompatibility (MH) (pMH) complexes that are displayed by antigen presenting cells (APC), a prerequisite for efficient T cell adaptive immunity against pathogens (PubMed:25493333). Binding of alpha-beta TR to pMH complex initiates TR-CD3 clustering on the cell surface and intracellular activation of LCK that phosphorylates the ITAM motifs of CD3G, CD3D, CD3E and CD247 enabling the recruitment of ZAP70. In turn ZAP70 phosphorylates LAT, which recruits numerous signaling molecules to form the LAT signalosome. The LAT signalosome propagates signal branching to three major signaling pathways, the calcium, the mitogen-activated protein kinase (MAPK) kinase and the nuclear factor NF-kappa-B (NF-kB) pathways, leading to the mobilization of transcription factors that are critical for gene expression and essential for T cell growth and differentiation (PubMed:23524462). The T cell repertoire is generated in the thymus, by V-(D)-J rearrangement. This repertoire is then shaped by intrathymic selection events to generate a peripheral T cell pool of self-MH restricted, non-autoaggressive T cells. Post-thymic interaction of alpha-beta TR with the pMH complexes shapes TR structural and functional avidity (PubMed:15040585).</text>
</comment>
<comment type="subunit">
    <text evidence="4">Alpha-beta TR is a heterodimer composed of an alpha and beta chain; disulfide-linked. The alpha-beta TR is associated with the transmembrane signaling CD3 coreceptor proteins to form the TR-CD3 (TcR or TCR). The assembly of alpha-beta TR heterodimers with CD3 occurs in the endoplasmic reticulum where a single alpha-beta TR heterodimer associates with one CD3D-CD3E heterodimer, one CD3G-CD3E heterodimer and one CD247 homodimer forming a stable octameric structure. CD3D-CD3E and CD3G-CD3E heterodimers preferentially associate with TR alpha and TR beta chains, respectively. The association of the CD247 homodimer is the last step of TcR assembly in the endoplasmic reticulum and is required for transport to the cell surface.</text>
</comment>
<comment type="subcellular location">
    <subcellularLocation>
        <location evidence="4">Cell membrane</location>
    </subcellularLocation>
</comment>
<comment type="polymorphism">
    <text evidence="9">There are several alleles. The sequence shown is that of IMGT allele TRAV26-2*01.</text>
</comment>
<feature type="signal peptide" evidence="1">
    <location>
        <begin position="1"/>
        <end position="19"/>
    </location>
</feature>
<feature type="chain" id="PRO_5002092612" description="T cell receptor alpha variable 26-2" evidence="1">
    <location>
        <begin position="20"/>
        <end position="109"/>
    </location>
</feature>
<feature type="domain" description="Ig-like" evidence="2">
    <location>
        <begin position="20"/>
        <end position="109" status="greater than"/>
    </location>
</feature>
<feature type="glycosylation site" description="N-linked (GlcNAc...) asparagine" evidence="1">
    <location>
        <position position="40"/>
    </location>
</feature>
<feature type="disulfide bond" evidence="2">
    <location>
        <begin position="39"/>
        <end position="105"/>
    </location>
</feature>
<feature type="non-terminal residue">
    <location>
        <position position="109"/>
    </location>
</feature>
<dbReference type="EMBL" id="AC245470">
    <property type="status" value="NOT_ANNOTATED_CDS"/>
    <property type="molecule type" value="Genomic_DNA"/>
</dbReference>
<dbReference type="SMR" id="A0A0B4J265"/>
<dbReference type="FunCoup" id="A0A0B4J265">
    <property type="interactions" value="332"/>
</dbReference>
<dbReference type="IMGT_GENE-DB" id="TRAV26-2"/>
<dbReference type="GlyCosmos" id="A0A0B4J265">
    <property type="glycosylation" value="1 site, No reported glycans"/>
</dbReference>
<dbReference type="GlyGen" id="A0A0B4J265">
    <property type="glycosylation" value="1 site"/>
</dbReference>
<dbReference type="BioMuta" id="TRAV26-2"/>
<dbReference type="Ensembl" id="ENST00000390460.1">
    <property type="protein sequence ID" value="ENSP00000450970.1"/>
    <property type="gene ID" value="ENSG00000211812.1"/>
</dbReference>
<dbReference type="AGR" id="HGNC:12124"/>
<dbReference type="GeneCards" id="TRAV26-2"/>
<dbReference type="HGNC" id="HGNC:12124">
    <property type="gene designation" value="TRAV26-2"/>
</dbReference>
<dbReference type="HPA" id="ENSG00000211812">
    <property type="expression patterns" value="Tissue enriched (lymphoid)"/>
</dbReference>
<dbReference type="neXtProt" id="NX_A0A0B4J265"/>
<dbReference type="VEuPathDB" id="HostDB:ENSG00000211812"/>
<dbReference type="GeneTree" id="ENSGT00940000162524"/>
<dbReference type="HOGENOM" id="CLU_077975_8_4_1"/>
<dbReference type="InParanoid" id="A0A0B4J265"/>
<dbReference type="OMA" id="AVYHCIL"/>
<dbReference type="OrthoDB" id="9631130at2759"/>
<dbReference type="PAN-GO" id="A0A0B4J265">
    <property type="GO annotations" value="1 GO annotation based on evolutionary models"/>
</dbReference>
<dbReference type="PhylomeDB" id="A0A0B4J265"/>
<dbReference type="ChiTaRS" id="TRAV26-2">
    <property type="organism name" value="human"/>
</dbReference>
<dbReference type="Pharos" id="A0A0B4J265">
    <property type="development level" value="Tdark"/>
</dbReference>
<dbReference type="PRO" id="PR:A0A0B4J265"/>
<dbReference type="Proteomes" id="UP000005640">
    <property type="component" value="Chromosome 14"/>
</dbReference>
<dbReference type="RNAct" id="A0A0B4J265">
    <property type="molecule type" value="protein"/>
</dbReference>
<dbReference type="Bgee" id="ENSG00000211812">
    <property type="expression patterns" value="Expressed in granulocyte and 86 other cell types or tissues"/>
</dbReference>
<dbReference type="GO" id="GO:0042101">
    <property type="term" value="C:T cell receptor complex"/>
    <property type="evidence" value="ECO:0007669"/>
    <property type="project" value="UniProtKB-KW"/>
</dbReference>
<dbReference type="GO" id="GO:0002250">
    <property type="term" value="P:adaptive immune response"/>
    <property type="evidence" value="ECO:0007669"/>
    <property type="project" value="UniProtKB-KW"/>
</dbReference>
<dbReference type="GO" id="GO:0009617">
    <property type="term" value="P:response to bacterium"/>
    <property type="evidence" value="ECO:0000318"/>
    <property type="project" value="GO_Central"/>
</dbReference>
<dbReference type="Gene3D" id="2.60.40.10">
    <property type="entry name" value="Immunoglobulins"/>
    <property type="match status" value="1"/>
</dbReference>
<dbReference type="InterPro" id="IPR007110">
    <property type="entry name" value="Ig-like_dom"/>
</dbReference>
<dbReference type="InterPro" id="IPR036179">
    <property type="entry name" value="Ig-like_dom_sf"/>
</dbReference>
<dbReference type="InterPro" id="IPR013783">
    <property type="entry name" value="Ig-like_fold"/>
</dbReference>
<dbReference type="InterPro" id="IPR013106">
    <property type="entry name" value="Ig_V-set"/>
</dbReference>
<dbReference type="InterPro" id="IPR052051">
    <property type="entry name" value="TCR_complex_component"/>
</dbReference>
<dbReference type="PANTHER" id="PTHR19433:SF86">
    <property type="entry name" value="T CELL RECEPTOR ALPHA VARIABLE 26-2"/>
    <property type="match status" value="1"/>
</dbReference>
<dbReference type="PANTHER" id="PTHR19433">
    <property type="entry name" value="T-CELL RECEPTOR ALPHA CHAIN V REGION-RELATED"/>
    <property type="match status" value="1"/>
</dbReference>
<dbReference type="Pfam" id="PF07686">
    <property type="entry name" value="V-set"/>
    <property type="match status" value="1"/>
</dbReference>
<dbReference type="SMART" id="SM00406">
    <property type="entry name" value="IGv"/>
    <property type="match status" value="1"/>
</dbReference>
<dbReference type="SUPFAM" id="SSF48726">
    <property type="entry name" value="Immunoglobulin"/>
    <property type="match status" value="1"/>
</dbReference>
<dbReference type="PROSITE" id="PS50835">
    <property type="entry name" value="IG_LIKE"/>
    <property type="match status" value="1"/>
</dbReference>
<proteinExistence type="inferred from homology"/>
<protein>
    <recommendedName>
        <fullName evidence="8">T cell receptor alpha variable 26-2</fullName>
    </recommendedName>
</protein>
<accession>A0A0B4J265</accession>